<evidence type="ECO:0000250" key="1"/>
<evidence type="ECO:0000269" key="2">
    <source>
    </source>
</evidence>
<evidence type="ECO:0000269" key="3">
    <source>
    </source>
</evidence>
<evidence type="ECO:0000269" key="4">
    <source>
    </source>
</evidence>
<evidence type="ECO:0000305" key="5"/>
<evidence type="ECO:0007829" key="6">
    <source>
        <dbReference type="PDB" id="4HL6"/>
    </source>
</evidence>
<organism>
    <name type="scientific">Escherichia coli (strain K12)</name>
    <dbReference type="NCBI Taxonomy" id="83333"/>
    <lineage>
        <taxon>Bacteria</taxon>
        <taxon>Pseudomonadati</taxon>
        <taxon>Pseudomonadota</taxon>
        <taxon>Gammaproteobacteria</taxon>
        <taxon>Enterobacterales</taxon>
        <taxon>Enterobacteriaceae</taxon>
        <taxon>Escherichia</taxon>
    </lineage>
</organism>
<accession>P76518</accession>
<accession>P76946</accession>
<comment type="function">
    <text evidence="4">Involved in the catabolism of oxalate and in the adapatation to low pH. ACOCT serves to prime the oxalate-induced acid tolerance response (ATR) cycle by producing substrate for oxalyl-CoA decarboxylase (OXC) and formyl-coenzyme A transferase (FCOCT). Catalyzes the reversible conversion of acetyl-CoA and oxalate to oxalyl-CoA and acetate. It can also use formyl-CoA and oxalate to produce oxalyl-CoA and formate with significantly reduced specific activity.</text>
</comment>
<comment type="catalytic activity">
    <reaction evidence="4">
        <text>oxalate + acetyl-CoA = oxalyl-CoA + acetate</text>
        <dbReference type="Rhea" id="RHEA:37883"/>
        <dbReference type="ChEBI" id="CHEBI:30089"/>
        <dbReference type="ChEBI" id="CHEBI:30623"/>
        <dbReference type="ChEBI" id="CHEBI:57288"/>
        <dbReference type="ChEBI" id="CHEBI:57388"/>
        <dbReference type="EC" id="2.8.3.19"/>
    </reaction>
</comment>
<comment type="biophysicochemical properties">
    <kinetics>
        <KM evidence="4">17 uM for acetyl-CoA (at pH 6.7 and 25 degrees Celsius)</KM>
        <KM evidence="4">22 mM for oxalate (at pH 6.7 and 25 degrees Celsius)</KM>
        <text>kcat is 11 sec(-1) for the CoA-transferase activity with acetyl-CoA as substrate (at pH 6.7 and 25 degrees Celsius). kcat is 15 sec(-1) for the CoA-transferase activity with oxalate as substrate (at pH 6.7 and 25 degrees Celsius).</text>
    </kinetics>
</comment>
<comment type="subunit">
    <text evidence="4">Homodimer.</text>
</comment>
<comment type="induction">
    <text evidence="2 3">By the acid response regulator EvgA.</text>
</comment>
<comment type="similarity">
    <text evidence="5">Belongs to the CoA-transferase III family.</text>
</comment>
<comment type="sequence caution" evidence="5">
    <conflict type="frameshift">
        <sequence resource="EMBL" id="D14008"/>
    </conflict>
</comment>
<feature type="chain" id="PRO_0000194725" description="Acetyl-CoA:oxalate CoA-transferase">
    <location>
        <begin position="1"/>
        <end position="381"/>
    </location>
</feature>
<feature type="active site" evidence="1">
    <location>
        <position position="233"/>
    </location>
</feature>
<feature type="sequence conflict" description="In Ref. 4; D14008." evidence="5" ref="4">
    <original>I</original>
    <variation>T</variation>
    <location>
        <position position="294"/>
    </location>
</feature>
<feature type="sequence conflict" description="In Ref. 4; D14008." evidence="5" ref="4">
    <original>Q</original>
    <variation>E</variation>
    <location>
        <position position="333"/>
    </location>
</feature>
<feature type="sequence conflict" description="In Ref. 4; D14008." evidence="5" ref="4">
    <original>A</original>
    <variation>T</variation>
    <location>
        <position position="357"/>
    </location>
</feature>
<feature type="sequence conflict" description="In Ref. 4; D14008." evidence="5" ref="4">
    <original>L</original>
    <variation>S</variation>
    <location>
        <position position="368"/>
    </location>
</feature>
<feature type="turn" evidence="6">
    <location>
        <begin position="9"/>
        <end position="12"/>
    </location>
</feature>
<feature type="strand" evidence="6">
    <location>
        <begin position="14"/>
        <end position="17"/>
    </location>
</feature>
<feature type="helix" evidence="6">
    <location>
        <begin position="23"/>
        <end position="33"/>
    </location>
</feature>
<feature type="strand" evidence="6">
    <location>
        <begin position="37"/>
        <end position="42"/>
    </location>
</feature>
<feature type="turn" evidence="6">
    <location>
        <begin position="44"/>
        <end position="46"/>
    </location>
</feature>
<feature type="helix" evidence="6">
    <location>
        <begin position="49"/>
        <end position="52"/>
    </location>
</feature>
<feature type="helix" evidence="6">
    <location>
        <begin position="62"/>
        <end position="68"/>
    </location>
</feature>
<feature type="strand" evidence="6">
    <location>
        <begin position="72"/>
        <end position="75"/>
    </location>
</feature>
<feature type="helix" evidence="6">
    <location>
        <begin position="81"/>
        <end position="93"/>
    </location>
</feature>
<feature type="strand" evidence="6">
    <location>
        <begin position="95"/>
        <end position="99"/>
    </location>
</feature>
<feature type="helix" evidence="6">
    <location>
        <begin position="105"/>
        <end position="108"/>
    </location>
</feature>
<feature type="helix" evidence="6">
    <location>
        <begin position="113"/>
        <end position="119"/>
    </location>
</feature>
<feature type="strand" evidence="6">
    <location>
        <begin position="124"/>
        <end position="131"/>
    </location>
</feature>
<feature type="strand" evidence="6">
    <location>
        <begin position="133"/>
        <end position="135"/>
    </location>
</feature>
<feature type="turn" evidence="6">
    <location>
        <begin position="136"/>
        <end position="139"/>
    </location>
</feature>
<feature type="helix" evidence="6">
    <location>
        <begin position="144"/>
        <end position="151"/>
    </location>
</feature>
<feature type="helix" evidence="6">
    <location>
        <begin position="153"/>
        <end position="156"/>
    </location>
</feature>
<feature type="helix" evidence="6">
    <location>
        <begin position="171"/>
        <end position="194"/>
    </location>
</feature>
<feature type="strand" evidence="6">
    <location>
        <begin position="199"/>
        <end position="203"/>
    </location>
</feature>
<feature type="helix" evidence="6">
    <location>
        <begin position="204"/>
        <end position="209"/>
    </location>
</feature>
<feature type="helix" evidence="6">
    <location>
        <begin position="214"/>
        <end position="222"/>
    </location>
</feature>
<feature type="strand" evidence="6">
    <location>
        <begin position="239"/>
        <end position="242"/>
    </location>
</feature>
<feature type="strand" evidence="6">
    <location>
        <begin position="245"/>
        <end position="247"/>
    </location>
</feature>
<feature type="strand" evidence="6">
    <location>
        <begin position="249"/>
        <end position="252"/>
    </location>
</feature>
<feature type="helix" evidence="6">
    <location>
        <begin position="256"/>
        <end position="266"/>
    </location>
</feature>
<feature type="helix" evidence="6">
    <location>
        <begin position="269"/>
        <end position="271"/>
    </location>
</feature>
<feature type="turn" evidence="6">
    <location>
        <begin position="275"/>
        <end position="277"/>
    </location>
</feature>
<feature type="helix" evidence="6">
    <location>
        <begin position="280"/>
        <end position="285"/>
    </location>
</feature>
<feature type="helix" evidence="6">
    <location>
        <begin position="287"/>
        <end position="298"/>
    </location>
</feature>
<feature type="helix" evidence="6">
    <location>
        <begin position="303"/>
        <end position="312"/>
    </location>
</feature>
<feature type="strand" evidence="6">
    <location>
        <begin position="317"/>
        <end position="319"/>
    </location>
</feature>
<feature type="helix" evidence="6">
    <location>
        <begin position="323"/>
        <end position="326"/>
    </location>
</feature>
<feature type="helix" evidence="6">
    <location>
        <begin position="330"/>
        <end position="334"/>
    </location>
</feature>
<feature type="strand" evidence="6">
    <location>
        <begin position="338"/>
        <end position="341"/>
    </location>
</feature>
<feature type="strand" evidence="6">
    <location>
        <begin position="344"/>
        <end position="347"/>
    </location>
</feature>
<feature type="strand" evidence="6">
    <location>
        <begin position="350"/>
        <end position="353"/>
    </location>
</feature>
<feature type="strand" evidence="6">
    <location>
        <begin position="360"/>
        <end position="362"/>
    </location>
</feature>
<feature type="turn" evidence="6">
    <location>
        <begin position="368"/>
        <end position="371"/>
    </location>
</feature>
<feature type="helix" evidence="6">
    <location>
        <begin position="372"/>
        <end position="379"/>
    </location>
</feature>
<proteinExistence type="evidence at protein level"/>
<name>ACOCT_ECOLI</name>
<gene>
    <name type="primary">yfdE</name>
    <name type="ordered locus">b2371</name>
    <name type="ordered locus">JW2368</name>
</gene>
<dbReference type="EC" id="2.8.3.19"/>
<dbReference type="EMBL" id="U00096">
    <property type="protein sequence ID" value="AAC75430.2"/>
    <property type="molecule type" value="Genomic_DNA"/>
</dbReference>
<dbReference type="EMBL" id="AP009048">
    <property type="protein sequence ID" value="BAA16242.1"/>
    <property type="molecule type" value="Genomic_DNA"/>
</dbReference>
<dbReference type="EMBL" id="D14008">
    <property type="status" value="NOT_ANNOTATED_CDS"/>
    <property type="molecule type" value="Genomic_DNA"/>
</dbReference>
<dbReference type="PIR" id="H65010">
    <property type="entry name" value="H65010"/>
</dbReference>
<dbReference type="RefSeq" id="NP_416872.4">
    <property type="nucleotide sequence ID" value="NC_000913.3"/>
</dbReference>
<dbReference type="RefSeq" id="WP_001296867.1">
    <property type="nucleotide sequence ID" value="NZ_LN832404.1"/>
</dbReference>
<dbReference type="PDB" id="4HL6">
    <property type="method" value="X-ray"/>
    <property type="resolution" value="2.12 A"/>
    <property type="chains" value="A/B/C/D/E/F=1-381"/>
</dbReference>
<dbReference type="PDBsum" id="4HL6"/>
<dbReference type="SMR" id="P76518"/>
<dbReference type="BioGRID" id="4259190">
    <property type="interactions" value="9"/>
</dbReference>
<dbReference type="DIP" id="DIP-11994N"/>
<dbReference type="FunCoup" id="P76518">
    <property type="interactions" value="753"/>
</dbReference>
<dbReference type="IntAct" id="P76518">
    <property type="interactions" value="7"/>
</dbReference>
<dbReference type="STRING" id="511145.b2371"/>
<dbReference type="PaxDb" id="511145-b2371"/>
<dbReference type="EnsemblBacteria" id="AAC75430">
    <property type="protein sequence ID" value="AAC75430"/>
    <property type="gene ID" value="b2371"/>
</dbReference>
<dbReference type="GeneID" id="75202560"/>
<dbReference type="GeneID" id="946432"/>
<dbReference type="KEGG" id="ecj:JW2368"/>
<dbReference type="KEGG" id="eco:b2371"/>
<dbReference type="KEGG" id="ecoc:C3026_13185"/>
<dbReference type="PATRIC" id="fig|1411691.4.peg.4358"/>
<dbReference type="EchoBASE" id="EB3069"/>
<dbReference type="eggNOG" id="COG1804">
    <property type="taxonomic scope" value="Bacteria"/>
</dbReference>
<dbReference type="HOGENOM" id="CLU_033975_0_0_6"/>
<dbReference type="InParanoid" id="P76518"/>
<dbReference type="OMA" id="RVAMYDV"/>
<dbReference type="OrthoDB" id="9058532at2"/>
<dbReference type="PhylomeDB" id="P76518"/>
<dbReference type="BioCyc" id="EcoCyc:G7234-MONOMER"/>
<dbReference type="BioCyc" id="MetaCyc:G7234-MONOMER"/>
<dbReference type="BRENDA" id="2.8.3.19">
    <property type="organism ID" value="2026"/>
</dbReference>
<dbReference type="EvolutionaryTrace" id="P76518"/>
<dbReference type="PRO" id="PR:P76518"/>
<dbReference type="Proteomes" id="UP000000625">
    <property type="component" value="Chromosome"/>
</dbReference>
<dbReference type="GO" id="GO:0036412">
    <property type="term" value="F:acetyl-CoA:oxalate CoA-transferase"/>
    <property type="evidence" value="ECO:0000314"/>
    <property type="project" value="EcoCyc"/>
</dbReference>
<dbReference type="GO" id="GO:0008410">
    <property type="term" value="F:CoA-transferase activity"/>
    <property type="evidence" value="ECO:0000318"/>
    <property type="project" value="GO_Central"/>
</dbReference>
<dbReference type="GO" id="GO:0042803">
    <property type="term" value="F:protein homodimerization activity"/>
    <property type="evidence" value="ECO:0000314"/>
    <property type="project" value="EcoCyc"/>
</dbReference>
<dbReference type="Gene3D" id="3.40.50.10540">
    <property type="entry name" value="Crotonobetainyl-coa:carnitine coa-transferase, domain 1"/>
    <property type="match status" value="1"/>
</dbReference>
<dbReference type="Gene3D" id="3.30.1540.10">
    <property type="entry name" value="formyl-coa transferase, domain 3"/>
    <property type="match status" value="1"/>
</dbReference>
<dbReference type="InterPro" id="IPR050483">
    <property type="entry name" value="CoA-transferase_III_domain"/>
</dbReference>
<dbReference type="InterPro" id="IPR003673">
    <property type="entry name" value="CoA-Trfase_fam_III"/>
</dbReference>
<dbReference type="InterPro" id="IPR044855">
    <property type="entry name" value="CoA-Trfase_III_dom3_sf"/>
</dbReference>
<dbReference type="InterPro" id="IPR023606">
    <property type="entry name" value="CoA-Trfase_III_dom_1_sf"/>
</dbReference>
<dbReference type="NCBIfam" id="NF008511">
    <property type="entry name" value="PRK11430.1"/>
    <property type="match status" value="1"/>
</dbReference>
<dbReference type="PANTHER" id="PTHR48207">
    <property type="entry name" value="SUCCINATE--HYDROXYMETHYLGLUTARATE COA-TRANSFERASE"/>
    <property type="match status" value="1"/>
</dbReference>
<dbReference type="PANTHER" id="PTHR48207:SF3">
    <property type="entry name" value="SUCCINATE--HYDROXYMETHYLGLUTARATE COA-TRANSFERASE"/>
    <property type="match status" value="1"/>
</dbReference>
<dbReference type="Pfam" id="PF02515">
    <property type="entry name" value="CoA_transf_3"/>
    <property type="match status" value="1"/>
</dbReference>
<dbReference type="SUPFAM" id="SSF89796">
    <property type="entry name" value="CoA-transferase family III (CaiB/BaiF)"/>
    <property type="match status" value="1"/>
</dbReference>
<protein>
    <recommendedName>
        <fullName>Acetyl-CoA:oxalate CoA-transferase</fullName>
        <shortName>ACOCT</shortName>
        <ecNumber>2.8.3.19</ecNumber>
    </recommendedName>
    <alternativeName>
        <fullName>Acetyl-coenzyme A transferase</fullName>
    </alternativeName>
    <alternativeName>
        <fullName>CoA:oxalate CoA-transferase</fullName>
    </alternativeName>
</protein>
<sequence length="381" mass="41671">MTNNESKGPFEGLLVIDMTHVLNGPFGTQLLCNMGARVIKVEPPGHGDDTRTFGPYVDGQSLYYSFINHGKESVVLDLKNDHDKSIFINMLKQADVLAENFRPGTMEKLGFSWETLQEINPRLIYASSSGFGHTGPLKDAPAYDTIIQAMSGIMMETGYPDAPPVRVGTSLADLCGGVYLFSGIVSALYGREKSQRGAHVDIAMFDATLSFLEHGLMAYIATGKSPQRLGNRHPYMAPFDVFNTQDKPITICCGNDKLFSALCQALELTELVNDPRFSSNILRVQNQAILKQYIERTLKTQAAEVWLARIHEVGVPVAPLLSVAEAIKLPQTQARNMLIEAGGIMMPGNPIKISGCADPHVMPGAATLDQHGEQIRQEFSS</sequence>
<keyword id="KW-0002">3D-structure</keyword>
<keyword id="KW-1185">Reference proteome</keyword>
<keyword id="KW-0808">Transferase</keyword>
<reference key="1">
    <citation type="journal article" date="1997" name="DNA Res.">
        <title>Construction of a contiguous 874-kb sequence of the Escherichia coli-K12 genome corresponding to 50.0-68.8 min on the linkage map and analysis of its sequence features.</title>
        <authorList>
            <person name="Yamamoto Y."/>
            <person name="Aiba H."/>
            <person name="Baba T."/>
            <person name="Hayashi K."/>
            <person name="Inada T."/>
            <person name="Isono K."/>
            <person name="Itoh T."/>
            <person name="Kimura S."/>
            <person name="Kitagawa M."/>
            <person name="Makino K."/>
            <person name="Miki T."/>
            <person name="Mitsuhashi N."/>
            <person name="Mizobuchi K."/>
            <person name="Mori H."/>
            <person name="Nakade S."/>
            <person name="Nakamura Y."/>
            <person name="Nashimoto H."/>
            <person name="Oshima T."/>
            <person name="Oyama S."/>
            <person name="Saito N."/>
            <person name="Sampei G."/>
            <person name="Satoh Y."/>
            <person name="Sivasundaram S."/>
            <person name="Tagami H."/>
            <person name="Takahashi H."/>
            <person name="Takeda J."/>
            <person name="Takemoto K."/>
            <person name="Uehara K."/>
            <person name="Wada C."/>
            <person name="Yamagata S."/>
            <person name="Horiuchi T."/>
        </authorList>
    </citation>
    <scope>NUCLEOTIDE SEQUENCE [LARGE SCALE GENOMIC DNA]</scope>
    <source>
        <strain>K12 / W3110 / ATCC 27325 / DSM 5911</strain>
    </source>
</reference>
<reference key="2">
    <citation type="journal article" date="1997" name="Science">
        <title>The complete genome sequence of Escherichia coli K-12.</title>
        <authorList>
            <person name="Blattner F.R."/>
            <person name="Plunkett G. III"/>
            <person name="Bloch C.A."/>
            <person name="Perna N.T."/>
            <person name="Burland V."/>
            <person name="Riley M."/>
            <person name="Collado-Vides J."/>
            <person name="Glasner J.D."/>
            <person name="Rode C.K."/>
            <person name="Mayhew G.F."/>
            <person name="Gregor J."/>
            <person name="Davis N.W."/>
            <person name="Kirkpatrick H.A."/>
            <person name="Goeden M.A."/>
            <person name="Rose D.J."/>
            <person name="Mau B."/>
            <person name="Shao Y."/>
        </authorList>
    </citation>
    <scope>NUCLEOTIDE SEQUENCE [LARGE SCALE GENOMIC DNA]</scope>
    <source>
        <strain>K12 / MG1655 / ATCC 47076</strain>
    </source>
</reference>
<reference key="3">
    <citation type="journal article" date="2006" name="Mol. Syst. Biol.">
        <title>Highly accurate genome sequences of Escherichia coli K-12 strains MG1655 and W3110.</title>
        <authorList>
            <person name="Hayashi K."/>
            <person name="Morooka N."/>
            <person name="Yamamoto Y."/>
            <person name="Fujita K."/>
            <person name="Isono K."/>
            <person name="Choi S."/>
            <person name="Ohtsubo E."/>
            <person name="Baba T."/>
            <person name="Wanner B.L."/>
            <person name="Mori H."/>
            <person name="Horiuchi T."/>
        </authorList>
    </citation>
    <scope>NUCLEOTIDE SEQUENCE [LARGE SCALE GENOMIC DNA]</scope>
    <source>
        <strain>K12 / W3110 / ATCC 27325 / DSM 5911</strain>
    </source>
</reference>
<reference key="4">
    <citation type="journal article" date="1994" name="Gene">
        <title>Newly identified genes involved in the signal transduction of Escherichia coli K-12.</title>
        <authorList>
            <person name="Utsumi R."/>
            <person name="Katayama S."/>
            <person name="Taniguchi M."/>
            <person name="Horie T."/>
            <person name="Ikeda M."/>
            <person name="Igaki S."/>
            <person name="Nakagawa H."/>
            <person name="Miwa A."/>
            <person name="Tanabe H."/>
            <person name="Noda M."/>
        </authorList>
    </citation>
    <scope>NUCLEOTIDE SEQUENCE [GENOMIC DNA] OF 259-381</scope>
    <source>
        <strain>K12</strain>
    </source>
</reference>
<reference key="5">
    <citation type="journal article" date="2003" name="Mol. Microbiol.">
        <title>Regulatory network of acid resistance genes in Escherichia coli.</title>
        <authorList>
            <person name="Masuda N."/>
            <person name="Church G.M."/>
        </authorList>
    </citation>
    <scope>INDUCTION</scope>
</reference>
<reference key="6">
    <citation type="journal article" date="2013" name="J. Bacteriol.">
        <title>YfdW and YfdU are required for oxalate-induced acid tolerance in Escherichia coli K-12.</title>
        <authorList>
            <person name="Fontenot E.M."/>
            <person name="Ezelle K.E."/>
            <person name="Gabreski L.N."/>
            <person name="Giglio E.R."/>
            <person name="McAfee J.M."/>
            <person name="Mills A.C."/>
            <person name="Qureshi M.N."/>
            <person name="Salmon K.M."/>
            <person name="Toyota C.G."/>
        </authorList>
    </citation>
    <scope>INDUCTION</scope>
    <source>
        <strain>K12 / MG1655 / ATCC 47076</strain>
    </source>
</reference>
<reference key="7">
    <citation type="journal article" date="2013" name="PLoS ONE">
        <title>Function and X-ray crystal structure of Escherichia coli YfdE.</title>
        <authorList>
            <person name="Mullins E.A."/>
            <person name="Sullivan K.L."/>
            <person name="Kappock T.J."/>
        </authorList>
    </citation>
    <scope>X-RAY CRYSTALLOGRAPHY (2.12 ANGSTROMS)</scope>
    <scope>FUNCTION</scope>
    <scope>CATALYTIC ACTIVITY</scope>
    <scope>BIOPHYSICOCHEMICAL PROPERTIES</scope>
    <scope>MASS SPECTROMETRY</scope>
    <scope>SUBSTRATE SPECIFICITY</scope>
    <scope>SUBUNIT</scope>
    <source>
        <strain>K12 / BW25113</strain>
    </source>
</reference>